<keyword id="KW-0066">ATP synthesis</keyword>
<keyword id="KW-1003">Cell membrane</keyword>
<keyword id="KW-0139">CF(1)</keyword>
<keyword id="KW-0375">Hydrogen ion transport</keyword>
<keyword id="KW-0406">Ion transport</keyword>
<keyword id="KW-0472">Membrane</keyword>
<keyword id="KW-0813">Transport</keyword>
<dbReference type="EMBL" id="CP000560">
    <property type="protein sequence ID" value="ABS75725.1"/>
    <property type="molecule type" value="Genomic_DNA"/>
</dbReference>
<dbReference type="RefSeq" id="WP_003151176.1">
    <property type="nucleotide sequence ID" value="NC_009725.2"/>
</dbReference>
<dbReference type="SMR" id="A7Z9P9"/>
<dbReference type="GeneID" id="93082540"/>
<dbReference type="KEGG" id="bay:RBAM_033960"/>
<dbReference type="HOGENOM" id="CLU_084338_1_2_9"/>
<dbReference type="Proteomes" id="UP000001120">
    <property type="component" value="Chromosome"/>
</dbReference>
<dbReference type="GO" id="GO:0005886">
    <property type="term" value="C:plasma membrane"/>
    <property type="evidence" value="ECO:0007669"/>
    <property type="project" value="UniProtKB-SubCell"/>
</dbReference>
<dbReference type="GO" id="GO:0045259">
    <property type="term" value="C:proton-transporting ATP synthase complex"/>
    <property type="evidence" value="ECO:0007669"/>
    <property type="project" value="UniProtKB-KW"/>
</dbReference>
<dbReference type="GO" id="GO:0005524">
    <property type="term" value="F:ATP binding"/>
    <property type="evidence" value="ECO:0007669"/>
    <property type="project" value="UniProtKB-UniRule"/>
</dbReference>
<dbReference type="GO" id="GO:0046933">
    <property type="term" value="F:proton-transporting ATP synthase activity, rotational mechanism"/>
    <property type="evidence" value="ECO:0007669"/>
    <property type="project" value="UniProtKB-UniRule"/>
</dbReference>
<dbReference type="CDD" id="cd12152">
    <property type="entry name" value="F1-ATPase_delta"/>
    <property type="match status" value="1"/>
</dbReference>
<dbReference type="FunFam" id="1.20.5.440:FF:000001">
    <property type="entry name" value="ATP synthase epsilon chain"/>
    <property type="match status" value="1"/>
</dbReference>
<dbReference type="FunFam" id="2.60.15.10:FF:000001">
    <property type="entry name" value="ATP synthase epsilon chain"/>
    <property type="match status" value="1"/>
</dbReference>
<dbReference type="Gene3D" id="1.20.5.440">
    <property type="entry name" value="ATP synthase delta/epsilon subunit, C-terminal domain"/>
    <property type="match status" value="1"/>
</dbReference>
<dbReference type="Gene3D" id="2.60.15.10">
    <property type="entry name" value="F0F1 ATP synthase delta/epsilon subunit, N-terminal"/>
    <property type="match status" value="1"/>
</dbReference>
<dbReference type="HAMAP" id="MF_00530">
    <property type="entry name" value="ATP_synth_epsil_bac"/>
    <property type="match status" value="1"/>
</dbReference>
<dbReference type="InterPro" id="IPR036794">
    <property type="entry name" value="ATP_F1_dsu/esu_C_sf"/>
</dbReference>
<dbReference type="InterPro" id="IPR001469">
    <property type="entry name" value="ATP_synth_F1_dsu/esu"/>
</dbReference>
<dbReference type="InterPro" id="IPR020546">
    <property type="entry name" value="ATP_synth_F1_dsu/esu_N"/>
</dbReference>
<dbReference type="InterPro" id="IPR020547">
    <property type="entry name" value="ATP_synth_F1_esu_C"/>
</dbReference>
<dbReference type="InterPro" id="IPR036771">
    <property type="entry name" value="ATPsynth_dsu/esu_N"/>
</dbReference>
<dbReference type="NCBIfam" id="TIGR01216">
    <property type="entry name" value="ATP_synt_epsi"/>
    <property type="match status" value="1"/>
</dbReference>
<dbReference type="NCBIfam" id="NF001846">
    <property type="entry name" value="PRK00571.1-3"/>
    <property type="match status" value="1"/>
</dbReference>
<dbReference type="NCBIfam" id="NF009980">
    <property type="entry name" value="PRK13446.1"/>
    <property type="match status" value="1"/>
</dbReference>
<dbReference type="PANTHER" id="PTHR13822">
    <property type="entry name" value="ATP SYNTHASE DELTA/EPSILON CHAIN"/>
    <property type="match status" value="1"/>
</dbReference>
<dbReference type="PANTHER" id="PTHR13822:SF10">
    <property type="entry name" value="ATP SYNTHASE EPSILON CHAIN, CHLOROPLASTIC"/>
    <property type="match status" value="1"/>
</dbReference>
<dbReference type="Pfam" id="PF00401">
    <property type="entry name" value="ATP-synt_DE"/>
    <property type="match status" value="1"/>
</dbReference>
<dbReference type="Pfam" id="PF02823">
    <property type="entry name" value="ATP-synt_DE_N"/>
    <property type="match status" value="1"/>
</dbReference>
<dbReference type="SUPFAM" id="SSF46604">
    <property type="entry name" value="Epsilon subunit of F1F0-ATP synthase C-terminal domain"/>
    <property type="match status" value="1"/>
</dbReference>
<dbReference type="SUPFAM" id="SSF51344">
    <property type="entry name" value="Epsilon subunit of F1F0-ATP synthase N-terminal domain"/>
    <property type="match status" value="1"/>
</dbReference>
<reference key="1">
    <citation type="journal article" date="2007" name="Nat. Biotechnol.">
        <title>Comparative analysis of the complete genome sequence of the plant growth-promoting bacterium Bacillus amyloliquefaciens FZB42.</title>
        <authorList>
            <person name="Chen X.H."/>
            <person name="Koumoutsi A."/>
            <person name="Scholz R."/>
            <person name="Eisenreich A."/>
            <person name="Schneider K."/>
            <person name="Heinemeyer I."/>
            <person name="Morgenstern B."/>
            <person name="Voss B."/>
            <person name="Hess W.R."/>
            <person name="Reva O."/>
            <person name="Junge H."/>
            <person name="Voigt B."/>
            <person name="Jungblut P.R."/>
            <person name="Vater J."/>
            <person name="Suessmuth R."/>
            <person name="Liesegang H."/>
            <person name="Strittmatter A."/>
            <person name="Gottschalk G."/>
            <person name="Borriss R."/>
        </authorList>
    </citation>
    <scope>NUCLEOTIDE SEQUENCE [LARGE SCALE GENOMIC DNA]</scope>
    <source>
        <strain>DSM 23117 / BGSC 10A6 / LMG 26770 / FZB42</strain>
    </source>
</reference>
<protein>
    <recommendedName>
        <fullName evidence="1">ATP synthase epsilon chain</fullName>
    </recommendedName>
    <alternativeName>
        <fullName evidence="1">ATP synthase F1 sector epsilon subunit</fullName>
    </alternativeName>
    <alternativeName>
        <fullName evidence="1">F-ATPase epsilon subunit</fullName>
    </alternativeName>
</protein>
<organism>
    <name type="scientific">Bacillus velezensis (strain DSM 23117 / BGSC 10A6 / LMG 26770 / FZB42)</name>
    <name type="common">Bacillus amyloliquefaciens subsp. plantarum</name>
    <dbReference type="NCBI Taxonomy" id="326423"/>
    <lineage>
        <taxon>Bacteria</taxon>
        <taxon>Bacillati</taxon>
        <taxon>Bacillota</taxon>
        <taxon>Bacilli</taxon>
        <taxon>Bacillales</taxon>
        <taxon>Bacillaceae</taxon>
        <taxon>Bacillus</taxon>
        <taxon>Bacillus amyloliquefaciens group</taxon>
    </lineage>
</organism>
<sequence>MKTVKVNIVTPDGPVYDADIEMVSVRAESGDLGILPGHIPTVAPLKIGAVRLKKDGQTELAAVSGGFLEVRPDQVTILAQAAETAESIDKERALAAKKRAEDRLNKRSDDTDIRRAELALQRAVNRLDVAGN</sequence>
<name>ATPE_BACVZ</name>
<proteinExistence type="inferred from homology"/>
<comment type="function">
    <text evidence="1">Produces ATP from ADP in the presence of a proton gradient across the membrane.</text>
</comment>
<comment type="subunit">
    <text evidence="1">F-type ATPases have 2 components, CF(1) - the catalytic core - and CF(0) - the membrane proton channel. CF(1) has five subunits: alpha(3), beta(3), gamma(1), delta(1), epsilon(1). CF(0) has three main subunits: a, b and c.</text>
</comment>
<comment type="subcellular location">
    <subcellularLocation>
        <location evidence="1">Cell membrane</location>
        <topology evidence="1">Peripheral membrane protein</topology>
    </subcellularLocation>
</comment>
<comment type="similarity">
    <text evidence="1">Belongs to the ATPase epsilon chain family.</text>
</comment>
<evidence type="ECO:0000255" key="1">
    <source>
        <dbReference type="HAMAP-Rule" id="MF_00530"/>
    </source>
</evidence>
<feature type="chain" id="PRO_1000056455" description="ATP synthase epsilon chain">
    <location>
        <begin position="1"/>
        <end position="132"/>
    </location>
</feature>
<gene>
    <name evidence="1" type="primary">atpC</name>
    <name type="ordered locus">RBAM_033960</name>
</gene>
<accession>A7Z9P9</accession>